<sequence length="299" mass="33339">MRVDTRKCKGRMMQDLNEIFETIKSVAKEISEVIKYADLGYTTHENATGDTQLKLDVQSDEIITAKFKALSCVKALVSEEKDEILPINTNGKFIIAYDPLDGSSLVDVNFAVGSIFGIYENELKPQNLIAAAYSIYGPRLELVINDKKGTKPKFYRLGKDGNFKFVRELELAQKGKLNATGATQKGWSKTHRNFINELFDEGYRLRYSGAMVSDLHQILLKGGGLFSYPATSDHPNGKLRLLFEVLPFAFIYENAGGTTSDGKSDTLFDVNITKTHQTSPCFFGSASEIALLHKFYGKD</sequence>
<gene>
    <name evidence="1" type="primary">fbp</name>
    <name type="ordered locus">Ccur92_06140</name>
    <name type="ORF">CCV52592_0443</name>
</gene>
<organism>
    <name type="scientific">Campylobacter curvus (strain 525.92)</name>
    <dbReference type="NCBI Taxonomy" id="360105"/>
    <lineage>
        <taxon>Bacteria</taxon>
        <taxon>Pseudomonadati</taxon>
        <taxon>Campylobacterota</taxon>
        <taxon>Epsilonproteobacteria</taxon>
        <taxon>Campylobacterales</taxon>
        <taxon>Campylobacteraceae</taxon>
        <taxon>Campylobacter</taxon>
    </lineage>
</organism>
<proteinExistence type="inferred from homology"/>
<feature type="chain" id="PRO_0000364509" description="Fructose-1,6-bisphosphatase class 1">
    <location>
        <begin position="1"/>
        <end position="299"/>
    </location>
</feature>
<feature type="binding site" evidence="1">
    <location>
        <position position="79"/>
    </location>
    <ligand>
        <name>Mg(2+)</name>
        <dbReference type="ChEBI" id="CHEBI:18420"/>
        <label>1</label>
    </ligand>
</feature>
<feature type="binding site" evidence="1">
    <location>
        <position position="98"/>
    </location>
    <ligand>
        <name>Mg(2+)</name>
        <dbReference type="ChEBI" id="CHEBI:18420"/>
        <label>1</label>
    </ligand>
</feature>
<feature type="binding site" evidence="1">
    <location>
        <position position="98"/>
    </location>
    <ligand>
        <name>Mg(2+)</name>
        <dbReference type="ChEBI" id="CHEBI:18420"/>
        <label>2</label>
    </ligand>
</feature>
<feature type="binding site" evidence="1">
    <location>
        <position position="100"/>
    </location>
    <ligand>
        <name>Mg(2+)</name>
        <dbReference type="ChEBI" id="CHEBI:18420"/>
        <label>1</label>
    </ligand>
</feature>
<feature type="binding site" evidence="1">
    <location>
        <begin position="101"/>
        <end position="104"/>
    </location>
    <ligand>
        <name>substrate</name>
    </ligand>
</feature>
<feature type="binding site" evidence="1">
    <location>
        <position position="101"/>
    </location>
    <ligand>
        <name>Mg(2+)</name>
        <dbReference type="ChEBI" id="CHEBI:18420"/>
        <label>2</label>
    </ligand>
</feature>
<feature type="binding site" evidence="1">
    <location>
        <position position="207"/>
    </location>
    <ligand>
        <name>substrate</name>
    </ligand>
</feature>
<feature type="binding site" evidence="1">
    <location>
        <position position="238"/>
    </location>
    <ligand>
        <name>substrate</name>
    </ligand>
</feature>
<feature type="binding site" evidence="1">
    <location>
        <position position="244"/>
    </location>
    <ligand>
        <name>Mg(2+)</name>
        <dbReference type="ChEBI" id="CHEBI:18420"/>
        <label>2</label>
    </ligand>
</feature>
<keyword id="KW-0119">Carbohydrate metabolism</keyword>
<keyword id="KW-0963">Cytoplasm</keyword>
<keyword id="KW-0378">Hydrolase</keyword>
<keyword id="KW-0460">Magnesium</keyword>
<keyword id="KW-0479">Metal-binding</keyword>
<keyword id="KW-1185">Reference proteome</keyword>
<evidence type="ECO:0000255" key="1">
    <source>
        <dbReference type="HAMAP-Rule" id="MF_01855"/>
    </source>
</evidence>
<accession>A7GXH6</accession>
<comment type="catalytic activity">
    <reaction evidence="1">
        <text>beta-D-fructose 1,6-bisphosphate + H2O = beta-D-fructose 6-phosphate + phosphate</text>
        <dbReference type="Rhea" id="RHEA:11064"/>
        <dbReference type="ChEBI" id="CHEBI:15377"/>
        <dbReference type="ChEBI" id="CHEBI:32966"/>
        <dbReference type="ChEBI" id="CHEBI:43474"/>
        <dbReference type="ChEBI" id="CHEBI:57634"/>
        <dbReference type="EC" id="3.1.3.11"/>
    </reaction>
</comment>
<comment type="cofactor">
    <cofactor evidence="1">
        <name>Mg(2+)</name>
        <dbReference type="ChEBI" id="CHEBI:18420"/>
    </cofactor>
    <text evidence="1">Binds 2 magnesium ions per subunit.</text>
</comment>
<comment type="pathway">
    <text evidence="1">Carbohydrate biosynthesis; gluconeogenesis.</text>
</comment>
<comment type="subunit">
    <text evidence="1">Homotetramer.</text>
</comment>
<comment type="subcellular location">
    <subcellularLocation>
        <location evidence="1">Cytoplasm</location>
    </subcellularLocation>
</comment>
<comment type="similarity">
    <text evidence="1">Belongs to the FBPase class 1 family.</text>
</comment>
<dbReference type="EC" id="3.1.3.11" evidence="1"/>
<dbReference type="EMBL" id="CP000767">
    <property type="protein sequence ID" value="EAU00769.2"/>
    <property type="molecule type" value="Genomic_DNA"/>
</dbReference>
<dbReference type="SMR" id="A7GXH6"/>
<dbReference type="STRING" id="360105.CCV52592_0443"/>
<dbReference type="KEGG" id="ccv:CCV52592_0443"/>
<dbReference type="HOGENOM" id="CLU_039977_0_0_7"/>
<dbReference type="OrthoDB" id="9806756at2"/>
<dbReference type="UniPathway" id="UPA00138"/>
<dbReference type="Proteomes" id="UP000006380">
    <property type="component" value="Chromosome"/>
</dbReference>
<dbReference type="GO" id="GO:0005829">
    <property type="term" value="C:cytosol"/>
    <property type="evidence" value="ECO:0007669"/>
    <property type="project" value="TreeGrafter"/>
</dbReference>
<dbReference type="GO" id="GO:0042132">
    <property type="term" value="F:fructose 1,6-bisphosphate 1-phosphatase activity"/>
    <property type="evidence" value="ECO:0007669"/>
    <property type="project" value="UniProtKB-UniRule"/>
</dbReference>
<dbReference type="GO" id="GO:0000287">
    <property type="term" value="F:magnesium ion binding"/>
    <property type="evidence" value="ECO:0007669"/>
    <property type="project" value="UniProtKB-UniRule"/>
</dbReference>
<dbReference type="GO" id="GO:0030388">
    <property type="term" value="P:fructose 1,6-bisphosphate metabolic process"/>
    <property type="evidence" value="ECO:0007669"/>
    <property type="project" value="TreeGrafter"/>
</dbReference>
<dbReference type="GO" id="GO:0006002">
    <property type="term" value="P:fructose 6-phosphate metabolic process"/>
    <property type="evidence" value="ECO:0007669"/>
    <property type="project" value="TreeGrafter"/>
</dbReference>
<dbReference type="GO" id="GO:0006000">
    <property type="term" value="P:fructose metabolic process"/>
    <property type="evidence" value="ECO:0007669"/>
    <property type="project" value="TreeGrafter"/>
</dbReference>
<dbReference type="GO" id="GO:0006094">
    <property type="term" value="P:gluconeogenesis"/>
    <property type="evidence" value="ECO:0007669"/>
    <property type="project" value="UniProtKB-UniRule"/>
</dbReference>
<dbReference type="GO" id="GO:0005986">
    <property type="term" value="P:sucrose biosynthetic process"/>
    <property type="evidence" value="ECO:0007669"/>
    <property type="project" value="TreeGrafter"/>
</dbReference>
<dbReference type="Gene3D" id="3.40.190.80">
    <property type="match status" value="1"/>
</dbReference>
<dbReference type="Gene3D" id="3.30.540.10">
    <property type="entry name" value="Fructose-1,6-Bisphosphatase, subunit A, domain 1"/>
    <property type="match status" value="1"/>
</dbReference>
<dbReference type="HAMAP" id="MF_01855">
    <property type="entry name" value="FBPase_class1"/>
    <property type="match status" value="1"/>
</dbReference>
<dbReference type="InterPro" id="IPR044015">
    <property type="entry name" value="FBPase_C_dom"/>
</dbReference>
<dbReference type="InterPro" id="IPR000146">
    <property type="entry name" value="FBPase_class-1"/>
</dbReference>
<dbReference type="InterPro" id="IPR033391">
    <property type="entry name" value="FBPase_N"/>
</dbReference>
<dbReference type="InterPro" id="IPR028343">
    <property type="entry name" value="FBPtase"/>
</dbReference>
<dbReference type="InterPro" id="IPR023079">
    <property type="entry name" value="SBPase"/>
</dbReference>
<dbReference type="NCBIfam" id="NF006782">
    <property type="entry name" value="PRK09293.2-3"/>
    <property type="match status" value="1"/>
</dbReference>
<dbReference type="NCBIfam" id="NF006784">
    <property type="entry name" value="PRK09293.2-5"/>
    <property type="match status" value="1"/>
</dbReference>
<dbReference type="PANTHER" id="PTHR11556">
    <property type="entry name" value="FRUCTOSE-1,6-BISPHOSPHATASE-RELATED"/>
    <property type="match status" value="1"/>
</dbReference>
<dbReference type="PANTHER" id="PTHR11556:SF35">
    <property type="entry name" value="SEDOHEPTULOSE-1,7-BISPHOSPHATASE, CHLOROPLASTIC"/>
    <property type="match status" value="1"/>
</dbReference>
<dbReference type="Pfam" id="PF00316">
    <property type="entry name" value="FBPase"/>
    <property type="match status" value="1"/>
</dbReference>
<dbReference type="Pfam" id="PF18913">
    <property type="entry name" value="FBPase_C"/>
    <property type="match status" value="1"/>
</dbReference>
<dbReference type="PIRSF" id="PIRSF500210">
    <property type="entry name" value="FBPtase"/>
    <property type="match status" value="1"/>
</dbReference>
<dbReference type="PIRSF" id="PIRSF000904">
    <property type="entry name" value="FBPtase_SBPase"/>
    <property type="match status" value="1"/>
</dbReference>
<dbReference type="PRINTS" id="PR01958">
    <property type="entry name" value="S17BPHPHTASE"/>
</dbReference>
<dbReference type="SUPFAM" id="SSF56655">
    <property type="entry name" value="Carbohydrate phosphatase"/>
    <property type="match status" value="1"/>
</dbReference>
<reference key="1">
    <citation type="submission" date="2007-07" db="EMBL/GenBank/DDBJ databases">
        <title>Genome sequence of Campylobacter curvus 525.92 isolated from human feces.</title>
        <authorList>
            <person name="Fouts D.E."/>
            <person name="Mongodin E.F."/>
            <person name="Puiu D."/>
            <person name="Sebastian Y."/>
            <person name="Miller W.G."/>
            <person name="Mandrell R.E."/>
            <person name="Lastovica A.J."/>
            <person name="Nelson K.E."/>
        </authorList>
    </citation>
    <scope>NUCLEOTIDE SEQUENCE [LARGE SCALE GENOMIC DNA]</scope>
    <source>
        <strain>525.92</strain>
    </source>
</reference>
<name>F16PA_CAMC5</name>
<protein>
    <recommendedName>
        <fullName evidence="1">Fructose-1,6-bisphosphatase class 1</fullName>
        <shortName evidence="1">FBPase class 1</shortName>
        <ecNumber evidence="1">3.1.3.11</ecNumber>
    </recommendedName>
    <alternativeName>
        <fullName evidence="1">D-fructose-1,6-bisphosphate 1-phosphohydrolase class 1</fullName>
    </alternativeName>
</protein>